<gene>
    <name type="ordered locus">HD_2003</name>
</gene>
<reference key="1">
    <citation type="submission" date="2003-06" db="EMBL/GenBank/DDBJ databases">
        <title>The complete genome sequence of Haemophilus ducreyi.</title>
        <authorList>
            <person name="Munson R.S. Jr."/>
            <person name="Ray W.C."/>
            <person name="Mahairas G."/>
            <person name="Sabo P."/>
            <person name="Mungur R."/>
            <person name="Johnson L."/>
            <person name="Nguyen D."/>
            <person name="Wang J."/>
            <person name="Forst C."/>
            <person name="Hood L."/>
        </authorList>
    </citation>
    <scope>NUCLEOTIDE SEQUENCE [LARGE SCALE GENOMIC DNA]</scope>
    <source>
        <strain>35000HP / ATCC 700724</strain>
    </source>
</reference>
<protein>
    <recommendedName>
        <fullName evidence="1">Probable Fe(2+)-trafficking protein</fullName>
    </recommendedName>
</protein>
<name>FETP_HAEDU</name>
<evidence type="ECO:0000255" key="1">
    <source>
        <dbReference type="HAMAP-Rule" id="MF_00686"/>
    </source>
</evidence>
<comment type="function">
    <text evidence="1">Could be a mediator in iron transactions between iron acquisition and iron-requiring processes, such as synthesis and/or repair of Fe-S clusters in biosynthetic enzymes.</text>
</comment>
<comment type="similarity">
    <text evidence="1">Belongs to the Fe(2+)-trafficking protein family.</text>
</comment>
<dbReference type="EMBL" id="AE017143">
    <property type="protein sequence ID" value="AAP96716.1"/>
    <property type="molecule type" value="Genomic_DNA"/>
</dbReference>
<dbReference type="RefSeq" id="WP_010945737.1">
    <property type="nucleotide sequence ID" value="NC_002940.2"/>
</dbReference>
<dbReference type="SMR" id="Q7VKB6"/>
<dbReference type="STRING" id="233412.HD_2003"/>
<dbReference type="KEGG" id="hdu:HD_2003"/>
<dbReference type="eggNOG" id="COG2924">
    <property type="taxonomic scope" value="Bacteria"/>
</dbReference>
<dbReference type="HOGENOM" id="CLU_170994_0_0_6"/>
<dbReference type="OrthoDB" id="9804318at2"/>
<dbReference type="Proteomes" id="UP000001022">
    <property type="component" value="Chromosome"/>
</dbReference>
<dbReference type="GO" id="GO:0005829">
    <property type="term" value="C:cytosol"/>
    <property type="evidence" value="ECO:0007669"/>
    <property type="project" value="TreeGrafter"/>
</dbReference>
<dbReference type="GO" id="GO:0005506">
    <property type="term" value="F:iron ion binding"/>
    <property type="evidence" value="ECO:0007669"/>
    <property type="project" value="UniProtKB-UniRule"/>
</dbReference>
<dbReference type="GO" id="GO:0034599">
    <property type="term" value="P:cellular response to oxidative stress"/>
    <property type="evidence" value="ECO:0007669"/>
    <property type="project" value="TreeGrafter"/>
</dbReference>
<dbReference type="FunFam" id="1.10.3880.10:FF:000001">
    <property type="entry name" value="Probable Fe(2+)-trafficking protein"/>
    <property type="match status" value="1"/>
</dbReference>
<dbReference type="Gene3D" id="1.10.3880.10">
    <property type="entry name" value="Fe(II) trafficking protein YggX"/>
    <property type="match status" value="1"/>
</dbReference>
<dbReference type="HAMAP" id="MF_00686">
    <property type="entry name" value="Fe_traffic_YggX"/>
    <property type="match status" value="1"/>
</dbReference>
<dbReference type="InterPro" id="IPR007457">
    <property type="entry name" value="Fe_traffick_prot_YggX"/>
</dbReference>
<dbReference type="InterPro" id="IPR036766">
    <property type="entry name" value="Fe_traffick_prot_YggX_sf"/>
</dbReference>
<dbReference type="NCBIfam" id="NF003817">
    <property type="entry name" value="PRK05408.1"/>
    <property type="match status" value="1"/>
</dbReference>
<dbReference type="PANTHER" id="PTHR36965">
    <property type="entry name" value="FE(2+)-TRAFFICKING PROTEIN-RELATED"/>
    <property type="match status" value="1"/>
</dbReference>
<dbReference type="PANTHER" id="PTHR36965:SF1">
    <property type="entry name" value="FE(2+)-TRAFFICKING PROTEIN-RELATED"/>
    <property type="match status" value="1"/>
</dbReference>
<dbReference type="Pfam" id="PF04362">
    <property type="entry name" value="Iron_traffic"/>
    <property type="match status" value="1"/>
</dbReference>
<dbReference type="PIRSF" id="PIRSF029827">
    <property type="entry name" value="Fe_traffic_YggX"/>
    <property type="match status" value="1"/>
</dbReference>
<dbReference type="SUPFAM" id="SSF111148">
    <property type="entry name" value="YggX-like"/>
    <property type="match status" value="1"/>
</dbReference>
<proteinExistence type="inferred from homology"/>
<organism>
    <name type="scientific">Haemophilus ducreyi (strain 35000HP / ATCC 700724)</name>
    <dbReference type="NCBI Taxonomy" id="233412"/>
    <lineage>
        <taxon>Bacteria</taxon>
        <taxon>Pseudomonadati</taxon>
        <taxon>Pseudomonadota</taxon>
        <taxon>Gammaproteobacteria</taxon>
        <taxon>Pasteurellales</taxon>
        <taxon>Pasteurellaceae</taxon>
        <taxon>Haemophilus</taxon>
    </lineage>
</organism>
<keyword id="KW-0408">Iron</keyword>
<keyword id="KW-1185">Reference proteome</keyword>
<feature type="chain" id="PRO_0000214483" description="Probable Fe(2+)-trafficking protein">
    <location>
        <begin position="1"/>
        <end position="94"/>
    </location>
</feature>
<sequence>MARMVFCEYLKKEAEGLDFQLYPGELGKRIFNSISKQAWAEWIKKQTMLVNEKKLNMMNPEHRQLLEAEMVNFLFEGKDVHIDGYVPVQTNTKA</sequence>
<accession>Q7VKB6</accession>